<comment type="catalytic activity">
    <reaction>
        <text>S-ubiquitinyl-[E2 ubiquitin-conjugating enzyme]-L-cysteine + [acceptor protein]-L-lysine = [E2 ubiquitin-conjugating enzyme]-L-cysteine + N(6)-ubiquitinyl-[acceptor protein]-L-lysine.</text>
        <dbReference type="EC" id="2.3.2.27"/>
    </reaction>
</comment>
<comment type="pathway">
    <text>Protein modification; protein ubiquitination.</text>
</comment>
<comment type="domain">
    <text evidence="1">The RING-type zinc finger domain mediates binding to an E2 ubiquitin-conjugating enzyme.</text>
</comment>
<comment type="similarity">
    <text evidence="5">Belongs to the RING-type zinc finger family.</text>
</comment>
<comment type="sequence caution" evidence="5">
    <conflict type="erroneous gene model prediction">
        <sequence resource="EMBL-CDS" id="AAC79106"/>
    </conflict>
</comment>
<comment type="sequence caution" evidence="5">
    <conflict type="erroneous gene model prediction">
        <sequence resource="EMBL-CDS" id="CAB77785"/>
    </conflict>
</comment>
<proteinExistence type="evidence at transcript level"/>
<dbReference type="EC" id="2.3.2.27"/>
<dbReference type="EMBL" id="AF069442">
    <property type="protein sequence ID" value="AAC79106.1"/>
    <property type="status" value="ALT_SEQ"/>
    <property type="molecule type" value="Genomic_DNA"/>
</dbReference>
<dbReference type="EMBL" id="AL161495">
    <property type="protein sequence ID" value="CAB77785.1"/>
    <property type="status" value="ALT_SEQ"/>
    <property type="molecule type" value="Genomic_DNA"/>
</dbReference>
<dbReference type="EMBL" id="CP002687">
    <property type="protein sequence ID" value="AEE82258.1"/>
    <property type="molecule type" value="Genomic_DNA"/>
</dbReference>
<dbReference type="EMBL" id="CP002687">
    <property type="protein sequence ID" value="AEE82259.1"/>
    <property type="molecule type" value="Genomic_DNA"/>
</dbReference>
<dbReference type="EMBL" id="AK226608">
    <property type="protein sequence ID" value="BAE98721.1"/>
    <property type="molecule type" value="mRNA"/>
</dbReference>
<dbReference type="EMBL" id="AK229071">
    <property type="protein sequence ID" value="BAF00952.1"/>
    <property type="molecule type" value="mRNA"/>
</dbReference>
<dbReference type="PIR" id="T01393">
    <property type="entry name" value="T01393"/>
</dbReference>
<dbReference type="RefSeq" id="NP_192209.2">
    <property type="nucleotide sequence ID" value="NM_116534.5"/>
</dbReference>
<dbReference type="RefSeq" id="NP_974504.1">
    <property type="nucleotide sequence ID" value="NM_202775.1"/>
</dbReference>
<dbReference type="SMR" id="Q0WPJ7"/>
<dbReference type="FunCoup" id="Q0WPJ7">
    <property type="interactions" value="669"/>
</dbReference>
<dbReference type="STRING" id="3702.Q0WPJ7"/>
<dbReference type="GlyGen" id="Q0WPJ7">
    <property type="glycosylation" value="1 site"/>
</dbReference>
<dbReference type="iPTMnet" id="Q0WPJ7"/>
<dbReference type="PaxDb" id="3702-AT4G03000.2"/>
<dbReference type="ProteomicsDB" id="236892"/>
<dbReference type="EnsemblPlants" id="AT4G03000.1">
    <property type="protein sequence ID" value="AT4G03000.1"/>
    <property type="gene ID" value="AT4G03000"/>
</dbReference>
<dbReference type="EnsemblPlants" id="AT4G03000.2">
    <property type="protein sequence ID" value="AT4G03000.2"/>
    <property type="gene ID" value="AT4G03000"/>
</dbReference>
<dbReference type="GeneID" id="828112"/>
<dbReference type="Gramene" id="AT4G03000.1">
    <property type="protein sequence ID" value="AT4G03000.1"/>
    <property type="gene ID" value="AT4G03000"/>
</dbReference>
<dbReference type="Gramene" id="AT4G03000.2">
    <property type="protein sequence ID" value="AT4G03000.2"/>
    <property type="gene ID" value="AT4G03000"/>
</dbReference>
<dbReference type="KEGG" id="ath:AT4G03000"/>
<dbReference type="Araport" id="AT4G03000"/>
<dbReference type="TAIR" id="AT4G03000"/>
<dbReference type="eggNOG" id="ENOG502SB0J">
    <property type="taxonomic scope" value="Eukaryota"/>
</dbReference>
<dbReference type="HOGENOM" id="CLU_012143_0_1_1"/>
<dbReference type="InParanoid" id="Q0WPJ7"/>
<dbReference type="OMA" id="DPFACYL"/>
<dbReference type="PhylomeDB" id="Q0WPJ7"/>
<dbReference type="UniPathway" id="UPA00143"/>
<dbReference type="PRO" id="PR:Q0WPJ7"/>
<dbReference type="Proteomes" id="UP000006548">
    <property type="component" value="Chromosome 4"/>
</dbReference>
<dbReference type="ExpressionAtlas" id="Q0WPJ7">
    <property type="expression patterns" value="baseline and differential"/>
</dbReference>
<dbReference type="GO" id="GO:0016740">
    <property type="term" value="F:transferase activity"/>
    <property type="evidence" value="ECO:0007669"/>
    <property type="project" value="UniProtKB-KW"/>
</dbReference>
<dbReference type="GO" id="GO:0008270">
    <property type="term" value="F:zinc ion binding"/>
    <property type="evidence" value="ECO:0007669"/>
    <property type="project" value="UniProtKB-KW"/>
</dbReference>
<dbReference type="GO" id="GO:0016567">
    <property type="term" value="P:protein ubiquitination"/>
    <property type="evidence" value="ECO:0007669"/>
    <property type="project" value="UniProtKB-UniPathway"/>
</dbReference>
<dbReference type="CDD" id="cd23128">
    <property type="entry name" value="RING-HC_MIP1-like"/>
    <property type="match status" value="1"/>
</dbReference>
<dbReference type="Gene3D" id="3.30.40.10">
    <property type="entry name" value="Zinc/RING finger domain, C3HC4 (zinc finger)"/>
    <property type="match status" value="1"/>
</dbReference>
<dbReference type="InterPro" id="IPR046934">
    <property type="entry name" value="PIR2-like"/>
</dbReference>
<dbReference type="InterPro" id="IPR046527">
    <property type="entry name" value="PIR2-like_helical"/>
</dbReference>
<dbReference type="InterPro" id="IPR001841">
    <property type="entry name" value="Znf_RING"/>
</dbReference>
<dbReference type="InterPro" id="IPR013083">
    <property type="entry name" value="Znf_RING/FYVE/PHD"/>
</dbReference>
<dbReference type="PANTHER" id="PTHR46405:SF4">
    <property type="entry name" value="E3 UBIQUITIN-PROTEIN LIGASE RF298-RELATED"/>
    <property type="match status" value="1"/>
</dbReference>
<dbReference type="PANTHER" id="PTHR46405">
    <property type="entry name" value="OS05G0141500 PROTEIN"/>
    <property type="match status" value="1"/>
</dbReference>
<dbReference type="Pfam" id="PF20235">
    <property type="entry name" value="PIR2-like_helical"/>
    <property type="match status" value="1"/>
</dbReference>
<dbReference type="Pfam" id="PF13920">
    <property type="entry name" value="zf-C3HC4_3"/>
    <property type="match status" value="1"/>
</dbReference>
<dbReference type="SUPFAM" id="SSF57850">
    <property type="entry name" value="RING/U-box"/>
    <property type="match status" value="1"/>
</dbReference>
<dbReference type="PROSITE" id="PS50089">
    <property type="entry name" value="ZF_RING_2"/>
    <property type="match status" value="1"/>
</dbReference>
<gene>
    <name type="primary">RF298</name>
    <name type="ordered locus">At4g03000</name>
    <name type="ORF">T4I9.12</name>
</gene>
<feature type="chain" id="PRO_0000395978" description="Putative E3 ubiquitin-protein ligase RF298">
    <location>
        <begin position="1"/>
        <end position="814"/>
    </location>
</feature>
<feature type="zinc finger region" description="RING-type" evidence="3">
    <location>
        <begin position="760"/>
        <end position="800"/>
    </location>
</feature>
<feature type="region of interest" description="Disordered" evidence="4">
    <location>
        <begin position="1"/>
        <end position="51"/>
    </location>
</feature>
<feature type="region of interest" description="Disordered" evidence="4">
    <location>
        <begin position="221"/>
        <end position="301"/>
    </location>
</feature>
<feature type="region of interest" description="Disordered" evidence="4">
    <location>
        <begin position="411"/>
        <end position="441"/>
    </location>
</feature>
<feature type="coiled-coil region" evidence="2">
    <location>
        <begin position="506"/>
        <end position="710"/>
    </location>
</feature>
<feature type="compositionally biased region" description="Low complexity" evidence="4">
    <location>
        <begin position="221"/>
        <end position="231"/>
    </location>
</feature>
<feature type="compositionally biased region" description="Polar residues" evidence="4">
    <location>
        <begin position="289"/>
        <end position="301"/>
    </location>
</feature>
<feature type="compositionally biased region" description="Basic and acidic residues" evidence="4">
    <location>
        <begin position="423"/>
        <end position="435"/>
    </location>
</feature>
<keyword id="KW-0175">Coiled coil</keyword>
<keyword id="KW-0479">Metal-binding</keyword>
<keyword id="KW-1185">Reference proteome</keyword>
<keyword id="KW-0808">Transferase</keyword>
<keyword id="KW-0833">Ubl conjugation pathway</keyword>
<keyword id="KW-0862">Zinc</keyword>
<keyword id="KW-0863">Zinc-finger</keyword>
<accession>Q0WPJ7</accession>
<accession>Q0WVX7</accession>
<accession>Q9ZT97</accession>
<protein>
    <recommendedName>
        <fullName>Putative E3 ubiquitin-protein ligase RF298</fullName>
        <ecNumber>2.3.2.27</ecNumber>
    </recommendedName>
    <alternativeName>
        <fullName>RING finger protein 298</fullName>
    </alternativeName>
    <alternativeName>
        <fullName evidence="5">RING-type E3 ubiquitin transferase RF298</fullName>
    </alternativeName>
</protein>
<name>RF298_ARATH</name>
<evidence type="ECO:0000250" key="1"/>
<evidence type="ECO:0000255" key="2"/>
<evidence type="ECO:0000255" key="3">
    <source>
        <dbReference type="PROSITE-ProRule" id="PRU00175"/>
    </source>
</evidence>
<evidence type="ECO:0000256" key="4">
    <source>
        <dbReference type="SAM" id="MobiDB-lite"/>
    </source>
</evidence>
<evidence type="ECO:0000305" key="5"/>
<organism>
    <name type="scientific">Arabidopsis thaliana</name>
    <name type="common">Mouse-ear cress</name>
    <dbReference type="NCBI Taxonomy" id="3702"/>
    <lineage>
        <taxon>Eukaryota</taxon>
        <taxon>Viridiplantae</taxon>
        <taxon>Streptophyta</taxon>
        <taxon>Embryophyta</taxon>
        <taxon>Tracheophyta</taxon>
        <taxon>Spermatophyta</taxon>
        <taxon>Magnoliopsida</taxon>
        <taxon>eudicotyledons</taxon>
        <taxon>Gunneridae</taxon>
        <taxon>Pentapetalae</taxon>
        <taxon>rosids</taxon>
        <taxon>malvids</taxon>
        <taxon>Brassicales</taxon>
        <taxon>Brassicaceae</taxon>
        <taxon>Camelineae</taxon>
        <taxon>Arabidopsis</taxon>
    </lineage>
</organism>
<sequence length="814" mass="90159">MVEKQEEMNEFGAVNGGKVGTSSSVSPPQDKGRKNKRKLADPSPQNAASLTEFPRYELHSFKSQSPLCENDSNGQLKAEESDSVGWDDPFACHLEGLLSSNLLTLFRSAMNQIMDCGYSEDVVLKAISSSRFYCGGTDLVSNIVNDTLSFLKSGKKVAGSRDYVFEDLQQLVAYSLVEKISLVREVRPSLSTDEAMWRLLICDLNVLKAFEVDADGLEGSSVSNASKSSESPVAECNPPKSSDADNPKAPVSNTQSKQSEPVKFGNFANVNNSKNPHASGATPGKEVFSVSTASGEGTKSASLTSVSDEKLVSCRKGRTKKEMAMLRQKSCVEKIRTYSKGGGYKTAKFGGFLVEKRGKSASDLLSAQARNSSSKITTEVMKIPLAESSSTLSNSTKSDSPALDVKEHVTALPANNAPAPVASEKKSGSEPEEKPSVSTKPAPDYYAAIPYDATLGIYIPRNKRDELILKLVPRMKDLQKELQDWTDWANQKVKQATVRLLKDQPELKALRKEKEEAEEFRKEKQLLEENTIKRRSEMELALNNATNQLERTNNTIRRLELEQSLLKREREAANIRASESAESCREAKERVQRLLKNSQSWEGQKNLLQEELKSQRDKVAGLQQEVAKAKTRQNQIEATWKQEKSATGKLTAQAAALKKERGKLEELGKAEEERIKTKAENDVKYYIENIKRLDTEISKLKLKSDSLKIAALKKGIDGNNDGNKSGMNHTTNTKANSMASAKVWENNQGAESKIKRERECVMCLSEEMSVIFLPCAHQVLCSKCNQLHEKEAMEDCPSCRAKIQRRIQARFARG</sequence>
<reference key="1">
    <citation type="journal article" date="1999" name="Nature">
        <title>Sequence and analysis of chromosome 4 of the plant Arabidopsis thaliana.</title>
        <authorList>
            <person name="Mayer K.F.X."/>
            <person name="Schueller C."/>
            <person name="Wambutt R."/>
            <person name="Murphy G."/>
            <person name="Volckaert G."/>
            <person name="Pohl T."/>
            <person name="Duesterhoeft A."/>
            <person name="Stiekema W."/>
            <person name="Entian K.-D."/>
            <person name="Terryn N."/>
            <person name="Harris B."/>
            <person name="Ansorge W."/>
            <person name="Brandt P."/>
            <person name="Grivell L.A."/>
            <person name="Rieger M."/>
            <person name="Weichselgartner M."/>
            <person name="de Simone V."/>
            <person name="Obermaier B."/>
            <person name="Mache R."/>
            <person name="Mueller M."/>
            <person name="Kreis M."/>
            <person name="Delseny M."/>
            <person name="Puigdomenech P."/>
            <person name="Watson M."/>
            <person name="Schmidtheini T."/>
            <person name="Reichert B."/>
            <person name="Portetelle D."/>
            <person name="Perez-Alonso M."/>
            <person name="Boutry M."/>
            <person name="Bancroft I."/>
            <person name="Vos P."/>
            <person name="Hoheisel J."/>
            <person name="Zimmermann W."/>
            <person name="Wedler H."/>
            <person name="Ridley P."/>
            <person name="Langham S.-A."/>
            <person name="McCullagh B."/>
            <person name="Bilham L."/>
            <person name="Robben J."/>
            <person name="van der Schueren J."/>
            <person name="Grymonprez B."/>
            <person name="Chuang Y.-J."/>
            <person name="Vandenbussche F."/>
            <person name="Braeken M."/>
            <person name="Weltjens I."/>
            <person name="Voet M."/>
            <person name="Bastiaens I."/>
            <person name="Aert R."/>
            <person name="Defoor E."/>
            <person name="Weitzenegger T."/>
            <person name="Bothe G."/>
            <person name="Ramsperger U."/>
            <person name="Hilbert H."/>
            <person name="Braun M."/>
            <person name="Holzer E."/>
            <person name="Brandt A."/>
            <person name="Peters S."/>
            <person name="van Staveren M."/>
            <person name="Dirkse W."/>
            <person name="Mooijman P."/>
            <person name="Klein Lankhorst R."/>
            <person name="Rose M."/>
            <person name="Hauf J."/>
            <person name="Koetter P."/>
            <person name="Berneiser S."/>
            <person name="Hempel S."/>
            <person name="Feldpausch M."/>
            <person name="Lamberth S."/>
            <person name="Van den Daele H."/>
            <person name="De Keyser A."/>
            <person name="Buysshaert C."/>
            <person name="Gielen J."/>
            <person name="Villarroel R."/>
            <person name="De Clercq R."/>
            <person name="van Montagu M."/>
            <person name="Rogers J."/>
            <person name="Cronin A."/>
            <person name="Quail M.A."/>
            <person name="Bray-Allen S."/>
            <person name="Clark L."/>
            <person name="Doggett J."/>
            <person name="Hall S."/>
            <person name="Kay M."/>
            <person name="Lennard N."/>
            <person name="McLay K."/>
            <person name="Mayes R."/>
            <person name="Pettett A."/>
            <person name="Rajandream M.A."/>
            <person name="Lyne M."/>
            <person name="Benes V."/>
            <person name="Rechmann S."/>
            <person name="Borkova D."/>
            <person name="Bloecker H."/>
            <person name="Scharfe M."/>
            <person name="Grimm M."/>
            <person name="Loehnert T.-H."/>
            <person name="Dose S."/>
            <person name="de Haan M."/>
            <person name="Maarse A.C."/>
            <person name="Schaefer M."/>
            <person name="Mueller-Auer S."/>
            <person name="Gabel C."/>
            <person name="Fuchs M."/>
            <person name="Fartmann B."/>
            <person name="Granderath K."/>
            <person name="Dauner D."/>
            <person name="Herzl A."/>
            <person name="Neumann S."/>
            <person name="Argiriou A."/>
            <person name="Vitale D."/>
            <person name="Liguori R."/>
            <person name="Piravandi E."/>
            <person name="Massenet O."/>
            <person name="Quigley F."/>
            <person name="Clabauld G."/>
            <person name="Muendlein A."/>
            <person name="Felber R."/>
            <person name="Schnabl S."/>
            <person name="Hiller R."/>
            <person name="Schmidt W."/>
            <person name="Lecharny A."/>
            <person name="Aubourg S."/>
            <person name="Chefdor F."/>
            <person name="Cooke R."/>
            <person name="Berger C."/>
            <person name="Monfort A."/>
            <person name="Casacuberta E."/>
            <person name="Gibbons T."/>
            <person name="Weber N."/>
            <person name="Vandenbol M."/>
            <person name="Bargues M."/>
            <person name="Terol J."/>
            <person name="Torres A."/>
            <person name="Perez-Perez A."/>
            <person name="Purnelle B."/>
            <person name="Bent E."/>
            <person name="Johnson S."/>
            <person name="Tacon D."/>
            <person name="Jesse T."/>
            <person name="Heijnen L."/>
            <person name="Schwarz S."/>
            <person name="Scholler P."/>
            <person name="Heber S."/>
            <person name="Francs P."/>
            <person name="Bielke C."/>
            <person name="Frishman D."/>
            <person name="Haase D."/>
            <person name="Lemcke K."/>
            <person name="Mewes H.-W."/>
            <person name="Stocker S."/>
            <person name="Zaccaria P."/>
            <person name="Bevan M."/>
            <person name="Wilson R.K."/>
            <person name="de la Bastide M."/>
            <person name="Habermann K."/>
            <person name="Parnell L."/>
            <person name="Dedhia N."/>
            <person name="Gnoj L."/>
            <person name="Schutz K."/>
            <person name="Huang E."/>
            <person name="Spiegel L."/>
            <person name="Sekhon M."/>
            <person name="Murray J."/>
            <person name="Sheet P."/>
            <person name="Cordes M."/>
            <person name="Abu-Threideh J."/>
            <person name="Stoneking T."/>
            <person name="Kalicki J."/>
            <person name="Graves T."/>
            <person name="Harmon G."/>
            <person name="Edwards J."/>
            <person name="Latreille P."/>
            <person name="Courtney L."/>
            <person name="Cloud J."/>
            <person name="Abbott A."/>
            <person name="Scott K."/>
            <person name="Johnson D."/>
            <person name="Minx P."/>
            <person name="Bentley D."/>
            <person name="Fulton B."/>
            <person name="Miller N."/>
            <person name="Greco T."/>
            <person name="Kemp K."/>
            <person name="Kramer J."/>
            <person name="Fulton L."/>
            <person name="Mardis E."/>
            <person name="Dante M."/>
            <person name="Pepin K."/>
            <person name="Hillier L.W."/>
            <person name="Nelson J."/>
            <person name="Spieth J."/>
            <person name="Ryan E."/>
            <person name="Andrews S."/>
            <person name="Geisel C."/>
            <person name="Layman D."/>
            <person name="Du H."/>
            <person name="Ali J."/>
            <person name="Berghoff A."/>
            <person name="Jones K."/>
            <person name="Drone K."/>
            <person name="Cotton M."/>
            <person name="Joshu C."/>
            <person name="Antonoiu B."/>
            <person name="Zidanic M."/>
            <person name="Strong C."/>
            <person name="Sun H."/>
            <person name="Lamar B."/>
            <person name="Yordan C."/>
            <person name="Ma P."/>
            <person name="Zhong J."/>
            <person name="Preston R."/>
            <person name="Vil D."/>
            <person name="Shekher M."/>
            <person name="Matero A."/>
            <person name="Shah R."/>
            <person name="Swaby I.K."/>
            <person name="O'Shaughnessy A."/>
            <person name="Rodriguez M."/>
            <person name="Hoffman J."/>
            <person name="Till S."/>
            <person name="Granat S."/>
            <person name="Shohdy N."/>
            <person name="Hasegawa A."/>
            <person name="Hameed A."/>
            <person name="Lodhi M."/>
            <person name="Johnson A."/>
            <person name="Chen E."/>
            <person name="Marra M.A."/>
            <person name="Martienssen R."/>
            <person name="McCombie W.R."/>
        </authorList>
    </citation>
    <scope>NUCLEOTIDE SEQUENCE [LARGE SCALE GENOMIC DNA]</scope>
    <source>
        <strain>cv. Columbia</strain>
    </source>
</reference>
<reference key="2">
    <citation type="journal article" date="2017" name="Plant J.">
        <title>Araport11: a complete reannotation of the Arabidopsis thaliana reference genome.</title>
        <authorList>
            <person name="Cheng C.Y."/>
            <person name="Krishnakumar V."/>
            <person name="Chan A.P."/>
            <person name="Thibaud-Nissen F."/>
            <person name="Schobel S."/>
            <person name="Town C.D."/>
        </authorList>
    </citation>
    <scope>GENOME REANNOTATION</scope>
    <source>
        <strain>cv. Columbia</strain>
    </source>
</reference>
<reference key="3">
    <citation type="submission" date="2009-07" db="EMBL/GenBank/DDBJ databases">
        <title>Large-scale analysis of RIKEN Arabidopsis full-length (RAFL) cDNAs.</title>
        <authorList>
            <person name="Totoki Y."/>
            <person name="Seki M."/>
            <person name="Ishida J."/>
            <person name="Nakajima M."/>
            <person name="Enju A."/>
            <person name="Kamiya A."/>
            <person name="Narusaka M."/>
            <person name="Shin-i T."/>
            <person name="Nakagawa M."/>
            <person name="Sakamoto N."/>
            <person name="Oishi K."/>
            <person name="Kohara Y."/>
            <person name="Kobayashi M."/>
            <person name="Toyoda A."/>
            <person name="Sakaki Y."/>
            <person name="Sakurai T."/>
            <person name="Iida K."/>
            <person name="Akiyama K."/>
            <person name="Satou M."/>
            <person name="Toyoda T."/>
            <person name="Konagaya A."/>
            <person name="Carninci P."/>
            <person name="Kawai J."/>
            <person name="Hayashizaki Y."/>
            <person name="Shinozaki K."/>
        </authorList>
    </citation>
    <scope>NUCLEOTIDE SEQUENCE [LARGE SCALE MRNA]</scope>
    <source>
        <strain>cv. Columbia</strain>
    </source>
</reference>
<reference key="4">
    <citation type="journal article" date="2002" name="Genome Biol.">
        <title>Evaluation and classification of RING-finger domains encoded by the Arabidopsis genome.</title>
        <authorList>
            <person name="Kosarev P."/>
            <person name="Mayer K.F.X."/>
            <person name="Hardtke C.S."/>
        </authorList>
    </citation>
    <scope>GENE FAMILY ORGANIZATION</scope>
</reference>